<organismHost>
    <name type="scientific">Homo sapiens</name>
    <name type="common">Human</name>
    <dbReference type="NCBI Taxonomy" id="9606"/>
</organismHost>
<feature type="signal peptide" evidence="2">
    <location>
        <begin position="1"/>
        <end position="21"/>
    </location>
</feature>
<feature type="chain" id="PRO_0000015465" description="Soluble interferon alpha/beta receptor OPG204">
    <location>
        <begin position="22"/>
        <end position="353"/>
    </location>
</feature>
<feature type="domain" description="Ig-like C2-type 1">
    <location>
        <begin position="67"/>
        <end position="139"/>
    </location>
</feature>
<feature type="domain" description="Ig-like C2-type 2">
    <location>
        <begin position="157"/>
        <end position="239"/>
    </location>
</feature>
<feature type="domain" description="Ig-like V-type">
    <location>
        <begin position="248"/>
        <end position="347"/>
    </location>
</feature>
<feature type="glycosylation site" description="N-linked (GlcNAc...) asparagine; by host" evidence="2">
    <location>
        <position position="119"/>
    </location>
</feature>
<feature type="glycosylation site" description="N-linked (GlcNAc...) asparagine; by host" evidence="2">
    <location>
        <position position="184"/>
    </location>
</feature>
<feature type="glycosylation site" description="N-linked (GlcNAc...) asparagine; by host" evidence="2">
    <location>
        <position position="263"/>
    </location>
</feature>
<feature type="glycosylation site" description="N-linked (GlcNAc...) asparagine; by host" evidence="2">
    <location>
        <position position="271"/>
    </location>
</feature>
<feature type="glycosylation site" description="N-linked (GlcNAc...) asparagine; by host" evidence="2">
    <location>
        <position position="323"/>
    </location>
</feature>
<feature type="disulfide bond" evidence="3">
    <location>
        <begin position="75"/>
        <end position="131"/>
    </location>
</feature>
<feature type="disulfide bond" evidence="3">
    <location>
        <begin position="174"/>
        <end position="223"/>
    </location>
</feature>
<feature type="disulfide bond" evidence="3">
    <location>
        <begin position="274"/>
        <end position="335"/>
    </location>
</feature>
<proteinExistence type="evidence at transcript level"/>
<reference key="1">
    <citation type="journal article" date="1990" name="Virology">
        <title>The complete DNA sequence of vaccinia virus.</title>
        <authorList>
            <person name="Goebel S.J."/>
            <person name="Johnson G.P."/>
            <person name="Perkus M.E."/>
            <person name="Davis S.W."/>
            <person name="Winslow J.P."/>
            <person name="Paoletti E."/>
        </authorList>
    </citation>
    <scope>NUCLEOTIDE SEQUENCE [LARGE SCALE GENOMIC DNA]</scope>
</reference>
<reference key="2">
    <citation type="journal article" date="1990" name="Virology">
        <title>Appendix to 'The complete DNA sequence of vaccinia virus'.</title>
        <authorList>
            <person name="Goebel S.J."/>
            <person name="Johnson G.P."/>
            <person name="Perkus M.E."/>
            <person name="Davis S.W."/>
            <person name="Winslow J.P."/>
            <person name="Paoletti E."/>
        </authorList>
    </citation>
    <scope>COMPLETE GENOME</scope>
</reference>
<sequence>MTMKMMVHIYFVSLSLLLLLFHSYAIDIENEITEFFNKMRDTLPAKDSKWLNPACMFGGTMNDMATLGEPFSAKCPPIEDSLLSHRYKDYVVKWERLEKNRRRQVSNKRVKHGDLWIANYTSKFSNRRYLCTVTTKNGDCVQGIVRSHIKKPPSCIPKTYELGTHDKYGIDLYCGILYAKHYNNITWYKDNKEINIDDIKYSQTGKELIIHNPELEDSGRYDCYVHYDDVRIKNDIVVSRCKILTVIPSQDHRFKLILDPKINVTIGEPANITCTAVSTSLLIDDVLIEWENPSGWLIGFDFDVYSVLTSRGGITEATLYFENVTEEYIGNTYKCRGHNYYFEKTLTTTVVLE</sequence>
<comment type="function">
    <text evidence="1">Counteracts the antiviral effects of host IFN-alpha/beta and key IFN-inducible proteins involved in viral RNA degradation suxh as host OAS1. Acts as a soluble IFN-alpha receptor and thus inhibits the interaction between host IFN-alpha and its receptor.</text>
</comment>
<comment type="subunit">
    <text evidence="1">Interacts with host IFNA1.</text>
</comment>
<comment type="subcellular location">
    <subcellularLocation>
        <location evidence="1">Secreted</location>
    </subcellularLocation>
    <text evidence="1">Found associated with both uninfected and infected host cell membranes after secretion.</text>
</comment>
<comment type="induction">
    <text>Expressed in the early phase of the viral replicative cycle.</text>
</comment>
<comment type="similarity">
    <text evidence="4">Belongs to the interleukin-1 receptor family.</text>
</comment>
<gene>
    <name type="primary">OPG204</name>
    <name type="ORF">B19R</name>
</gene>
<organism>
    <name type="scientific">Vaccinia virus (strain Copenhagen)</name>
    <name type="common">VACV</name>
    <dbReference type="NCBI Taxonomy" id="10249"/>
    <lineage>
        <taxon>Viruses</taxon>
        <taxon>Varidnaviria</taxon>
        <taxon>Bamfordvirae</taxon>
        <taxon>Nucleocytoviricota</taxon>
        <taxon>Pokkesviricetes</taxon>
        <taxon>Chitovirales</taxon>
        <taxon>Poxviridae</taxon>
        <taxon>Chordopoxvirinae</taxon>
        <taxon>Orthopoxvirus</taxon>
        <taxon>Vaccinia virus</taxon>
    </lineage>
</organism>
<accession>P21077</accession>
<keyword id="KW-1015">Disulfide bond</keyword>
<keyword id="KW-0244">Early protein</keyword>
<keyword id="KW-0325">Glycoprotein</keyword>
<keyword id="KW-0945">Host-virus interaction</keyword>
<keyword id="KW-0393">Immunoglobulin domain</keyword>
<keyword id="KW-1090">Inhibition of host innate immune response by virus</keyword>
<keyword id="KW-1114">Inhibition of host interferon signaling pathway by virus</keyword>
<keyword id="KW-0922">Interferon antiviral system evasion</keyword>
<keyword id="KW-1185">Reference proteome</keyword>
<keyword id="KW-0677">Repeat</keyword>
<keyword id="KW-0964">Secreted</keyword>
<keyword id="KW-0732">Signal</keyword>
<keyword id="KW-0899">Viral immunoevasion</keyword>
<evidence type="ECO:0000250" key="1">
    <source>
        <dbReference type="UniProtKB" id="P25213"/>
    </source>
</evidence>
<evidence type="ECO:0000255" key="2"/>
<evidence type="ECO:0000255" key="3">
    <source>
        <dbReference type="PROSITE-ProRule" id="PRU00114"/>
    </source>
</evidence>
<evidence type="ECO:0000305" key="4"/>
<name>PG204_VACCC</name>
<dbReference type="EMBL" id="M35027">
    <property type="protein sequence ID" value="AAA48218.1"/>
    <property type="molecule type" value="Genomic_DNA"/>
</dbReference>
<dbReference type="PIR" id="I42527">
    <property type="entry name" value="SAVZVC"/>
</dbReference>
<dbReference type="SMR" id="P21077"/>
<dbReference type="Proteomes" id="UP000008269">
    <property type="component" value="Segment"/>
</dbReference>
<dbReference type="GO" id="GO:0005576">
    <property type="term" value="C:extracellular region"/>
    <property type="evidence" value="ECO:0007669"/>
    <property type="project" value="UniProtKB-SubCell"/>
</dbReference>
<dbReference type="GO" id="GO:0052170">
    <property type="term" value="P:symbiont-mediated suppression of host innate immune response"/>
    <property type="evidence" value="ECO:0007669"/>
    <property type="project" value="UniProtKB-KW"/>
</dbReference>
<dbReference type="GO" id="GO:0039502">
    <property type="term" value="P:symbiont-mediated suppression of host type I interferon-mediated signaling pathway"/>
    <property type="evidence" value="ECO:0007669"/>
    <property type="project" value="UniProtKB-KW"/>
</dbReference>
<dbReference type="CDD" id="cd00096">
    <property type="entry name" value="Ig"/>
    <property type="match status" value="1"/>
</dbReference>
<dbReference type="Gene3D" id="2.60.40.10">
    <property type="entry name" value="Immunoglobulins"/>
    <property type="match status" value="3"/>
</dbReference>
<dbReference type="InterPro" id="IPR007110">
    <property type="entry name" value="Ig-like_dom"/>
</dbReference>
<dbReference type="InterPro" id="IPR036179">
    <property type="entry name" value="Ig-like_dom_sf"/>
</dbReference>
<dbReference type="InterPro" id="IPR013783">
    <property type="entry name" value="Ig-like_fold"/>
</dbReference>
<dbReference type="InterPro" id="IPR003599">
    <property type="entry name" value="Ig_sub"/>
</dbReference>
<dbReference type="InterPro" id="IPR015621">
    <property type="entry name" value="IL-1_rcpt_fam"/>
</dbReference>
<dbReference type="InterPro" id="IPR013151">
    <property type="entry name" value="Immunoglobulin_dom"/>
</dbReference>
<dbReference type="PANTHER" id="PTHR11890">
    <property type="entry name" value="INTERLEUKIN-1 RECEPTOR FAMILY MEMBER"/>
    <property type="match status" value="1"/>
</dbReference>
<dbReference type="PANTHER" id="PTHR11890:SF44">
    <property type="entry name" value="X-LINKED INTERLEUKIN-1 RECEPTOR ACCESSORY PROTEIN-LIKE 2"/>
    <property type="match status" value="1"/>
</dbReference>
<dbReference type="Pfam" id="PF00047">
    <property type="entry name" value="ig"/>
    <property type="match status" value="1"/>
</dbReference>
<dbReference type="Pfam" id="PF13895">
    <property type="entry name" value="Ig_2"/>
    <property type="match status" value="1"/>
</dbReference>
<dbReference type="SMART" id="SM00409">
    <property type="entry name" value="IG"/>
    <property type="match status" value="2"/>
</dbReference>
<dbReference type="SUPFAM" id="SSF48726">
    <property type="entry name" value="Immunoglobulin"/>
    <property type="match status" value="2"/>
</dbReference>
<dbReference type="PROSITE" id="PS50835">
    <property type="entry name" value="IG_LIKE"/>
    <property type="match status" value="2"/>
</dbReference>
<protein>
    <recommendedName>
        <fullName>Soluble interferon alpha/beta receptor OPG204</fullName>
    </recommendedName>
</protein>